<keyword id="KW-0472">Membrane</keyword>
<keyword id="KW-0812">Transmembrane</keyword>
<keyword id="KW-1133">Transmembrane helix</keyword>
<comment type="subcellular location">
    <subcellularLocation>
        <location evidence="1">Membrane</location>
        <topology evidence="1">Single-pass membrane protein</topology>
    </subcellularLocation>
</comment>
<comment type="similarity">
    <text evidence="1">Belongs to the UPF0154 family.</text>
</comment>
<name>Y1343_STAAM</name>
<evidence type="ECO:0000255" key="1">
    <source>
        <dbReference type="HAMAP-Rule" id="MF_00363"/>
    </source>
</evidence>
<sequence>MATWLAIIFIVAALILGLIGGFLLARKYMMDYLKKNPPINEEMLRMMMMQMGQKPSQKKINQMMTMMNKNMDQNMKSAKK</sequence>
<gene>
    <name type="ordered locus">SAV1343</name>
</gene>
<protein>
    <recommendedName>
        <fullName evidence="1">UPF0154 protein SAV1343</fullName>
    </recommendedName>
</protein>
<feature type="chain" id="PRO_0000214974" description="UPF0154 protein SAV1343">
    <location>
        <begin position="1"/>
        <end position="80"/>
    </location>
</feature>
<feature type="transmembrane region" description="Helical" evidence="1">
    <location>
        <begin position="4"/>
        <end position="24"/>
    </location>
</feature>
<organism>
    <name type="scientific">Staphylococcus aureus (strain Mu50 / ATCC 700699)</name>
    <dbReference type="NCBI Taxonomy" id="158878"/>
    <lineage>
        <taxon>Bacteria</taxon>
        <taxon>Bacillati</taxon>
        <taxon>Bacillota</taxon>
        <taxon>Bacilli</taxon>
        <taxon>Bacillales</taxon>
        <taxon>Staphylococcaceae</taxon>
        <taxon>Staphylococcus</taxon>
    </lineage>
</organism>
<reference key="1">
    <citation type="journal article" date="2001" name="Lancet">
        <title>Whole genome sequencing of meticillin-resistant Staphylococcus aureus.</title>
        <authorList>
            <person name="Kuroda M."/>
            <person name="Ohta T."/>
            <person name="Uchiyama I."/>
            <person name="Baba T."/>
            <person name="Yuzawa H."/>
            <person name="Kobayashi I."/>
            <person name="Cui L."/>
            <person name="Oguchi A."/>
            <person name="Aoki K."/>
            <person name="Nagai Y."/>
            <person name="Lian J.-Q."/>
            <person name="Ito T."/>
            <person name="Kanamori M."/>
            <person name="Matsumaru H."/>
            <person name="Maruyama A."/>
            <person name="Murakami H."/>
            <person name="Hosoyama A."/>
            <person name="Mizutani-Ui Y."/>
            <person name="Takahashi N.K."/>
            <person name="Sawano T."/>
            <person name="Inoue R."/>
            <person name="Kaito C."/>
            <person name="Sekimizu K."/>
            <person name="Hirakawa H."/>
            <person name="Kuhara S."/>
            <person name="Goto S."/>
            <person name="Yabuzaki J."/>
            <person name="Kanehisa M."/>
            <person name="Yamashita A."/>
            <person name="Oshima K."/>
            <person name="Furuya K."/>
            <person name="Yoshino C."/>
            <person name="Shiba T."/>
            <person name="Hattori M."/>
            <person name="Ogasawara N."/>
            <person name="Hayashi H."/>
            <person name="Hiramatsu K."/>
        </authorList>
    </citation>
    <scope>NUCLEOTIDE SEQUENCE [LARGE SCALE GENOMIC DNA]</scope>
    <source>
        <strain>Mu50 / ATCC 700699</strain>
    </source>
</reference>
<dbReference type="EMBL" id="BA000017">
    <property type="protein sequence ID" value="BAB57505.1"/>
    <property type="molecule type" value="Genomic_DNA"/>
</dbReference>
<dbReference type="RefSeq" id="WP_000246909.1">
    <property type="nucleotide sequence ID" value="NC_002758.2"/>
</dbReference>
<dbReference type="SMR" id="P67290"/>
<dbReference type="DNASU" id="1121319"/>
<dbReference type="KEGG" id="sav:SAV1343"/>
<dbReference type="HOGENOM" id="CLU_180108_0_1_9"/>
<dbReference type="PhylomeDB" id="P67290"/>
<dbReference type="Proteomes" id="UP000002481">
    <property type="component" value="Chromosome"/>
</dbReference>
<dbReference type="GO" id="GO:0005886">
    <property type="term" value="C:plasma membrane"/>
    <property type="evidence" value="ECO:0007669"/>
    <property type="project" value="UniProtKB-UniRule"/>
</dbReference>
<dbReference type="Gene3D" id="1.10.238.10">
    <property type="entry name" value="EF-hand"/>
    <property type="match status" value="1"/>
</dbReference>
<dbReference type="HAMAP" id="MF_00363">
    <property type="entry name" value="UPF0154"/>
    <property type="match status" value="1"/>
</dbReference>
<dbReference type="InterPro" id="IPR011992">
    <property type="entry name" value="EF-hand-dom_pair"/>
</dbReference>
<dbReference type="InterPro" id="IPR005359">
    <property type="entry name" value="UPF0154"/>
</dbReference>
<dbReference type="Pfam" id="PF03672">
    <property type="entry name" value="UPF0154"/>
    <property type="match status" value="1"/>
</dbReference>
<dbReference type="SUPFAM" id="SSF47473">
    <property type="entry name" value="EF-hand"/>
    <property type="match status" value="1"/>
</dbReference>
<proteinExistence type="inferred from homology"/>
<accession>P67290</accession>
<accession>Q99UD3</accession>